<sequence>MSLKDRFDKFIDYFTEDGDETEVQEQTVSRPAAPVKQKPELVQPKPVRESKPAPRPAAAAKPQPKPQPKPQPQQKSSTENITRLHARQQELAQHRANADEKITIDVRYPRRYEEATEIVDLLLANESILIDFQYMTEVQARRCLDYLDGARYVLAGNLKKVASTMYLLTPINVVVNVEDIRLPNDVEISEFDFDMKRSR</sequence>
<proteinExistence type="inferred from homology"/>
<accession>A3CLP1</accession>
<comment type="function">
    <text evidence="1">Cell division protein that is part of the divisome complex and is recruited early to the Z-ring. Probably stimulates Z-ring formation, perhaps through the cross-linking of FtsZ protofilaments. Its function overlaps with FtsA.</text>
</comment>
<comment type="subunit">
    <text evidence="1">Homodimer. Interacts with FtsZ.</text>
</comment>
<comment type="subcellular location">
    <subcellularLocation>
        <location evidence="1">Cytoplasm</location>
    </subcellularLocation>
    <text evidence="1">Localizes to the division site, in a FtsZ-dependent manner.</text>
</comment>
<comment type="similarity">
    <text evidence="1">Belongs to the SepF family.</text>
</comment>
<name>SEPF_STRSV</name>
<keyword id="KW-0131">Cell cycle</keyword>
<keyword id="KW-0132">Cell division</keyword>
<keyword id="KW-0963">Cytoplasm</keyword>
<keyword id="KW-1185">Reference proteome</keyword>
<keyword id="KW-0717">Septation</keyword>
<gene>
    <name evidence="1" type="primary">sepF</name>
    <name type="ordered locus">SSA_0658</name>
</gene>
<organism>
    <name type="scientific">Streptococcus sanguinis (strain SK36)</name>
    <dbReference type="NCBI Taxonomy" id="388919"/>
    <lineage>
        <taxon>Bacteria</taxon>
        <taxon>Bacillati</taxon>
        <taxon>Bacillota</taxon>
        <taxon>Bacilli</taxon>
        <taxon>Lactobacillales</taxon>
        <taxon>Streptococcaceae</taxon>
        <taxon>Streptococcus</taxon>
    </lineage>
</organism>
<feature type="chain" id="PRO_0000334109" description="Cell division protein SepF">
    <location>
        <begin position="1"/>
        <end position="199"/>
    </location>
</feature>
<feature type="region of interest" description="Disordered" evidence="2">
    <location>
        <begin position="15"/>
        <end position="79"/>
    </location>
</feature>
<evidence type="ECO:0000255" key="1">
    <source>
        <dbReference type="HAMAP-Rule" id="MF_01197"/>
    </source>
</evidence>
<evidence type="ECO:0000256" key="2">
    <source>
        <dbReference type="SAM" id="MobiDB-lite"/>
    </source>
</evidence>
<dbReference type="EMBL" id="CP000387">
    <property type="protein sequence ID" value="ABN44096.1"/>
    <property type="molecule type" value="Genomic_DNA"/>
</dbReference>
<dbReference type="RefSeq" id="WP_002900916.1">
    <property type="nucleotide sequence ID" value="NC_009009.1"/>
</dbReference>
<dbReference type="RefSeq" id="YP_001034646.1">
    <property type="nucleotide sequence ID" value="NC_009009.1"/>
</dbReference>
<dbReference type="SMR" id="A3CLP1"/>
<dbReference type="STRING" id="388919.SSA_0658"/>
<dbReference type="GeneID" id="48425081"/>
<dbReference type="KEGG" id="ssa:SSA_0658"/>
<dbReference type="PATRIC" id="fig|388919.9.peg.632"/>
<dbReference type="eggNOG" id="COG1799">
    <property type="taxonomic scope" value="Bacteria"/>
</dbReference>
<dbReference type="HOGENOM" id="CLU_078499_2_0_9"/>
<dbReference type="OrthoDB" id="9815206at2"/>
<dbReference type="Proteomes" id="UP000002148">
    <property type="component" value="Chromosome"/>
</dbReference>
<dbReference type="GO" id="GO:0005737">
    <property type="term" value="C:cytoplasm"/>
    <property type="evidence" value="ECO:0007669"/>
    <property type="project" value="UniProtKB-SubCell"/>
</dbReference>
<dbReference type="GO" id="GO:0000917">
    <property type="term" value="P:division septum assembly"/>
    <property type="evidence" value="ECO:0007669"/>
    <property type="project" value="UniProtKB-KW"/>
</dbReference>
<dbReference type="GO" id="GO:0043093">
    <property type="term" value="P:FtsZ-dependent cytokinesis"/>
    <property type="evidence" value="ECO:0007669"/>
    <property type="project" value="UniProtKB-UniRule"/>
</dbReference>
<dbReference type="Gene3D" id="3.30.110.150">
    <property type="entry name" value="SepF-like protein"/>
    <property type="match status" value="1"/>
</dbReference>
<dbReference type="HAMAP" id="MF_01197">
    <property type="entry name" value="SepF"/>
    <property type="match status" value="1"/>
</dbReference>
<dbReference type="InterPro" id="IPR023052">
    <property type="entry name" value="Cell_div_SepF"/>
</dbReference>
<dbReference type="InterPro" id="IPR007561">
    <property type="entry name" value="Cell_div_SepF/SepF-rel"/>
</dbReference>
<dbReference type="InterPro" id="IPR038594">
    <property type="entry name" value="SepF-like_sf"/>
</dbReference>
<dbReference type="PANTHER" id="PTHR35798">
    <property type="entry name" value="CELL DIVISION PROTEIN SEPF"/>
    <property type="match status" value="1"/>
</dbReference>
<dbReference type="PANTHER" id="PTHR35798:SF1">
    <property type="entry name" value="CELL DIVISION PROTEIN SEPF"/>
    <property type="match status" value="1"/>
</dbReference>
<dbReference type="Pfam" id="PF04472">
    <property type="entry name" value="SepF"/>
    <property type="match status" value="1"/>
</dbReference>
<protein>
    <recommendedName>
        <fullName evidence="1">Cell division protein SepF</fullName>
    </recommendedName>
</protein>
<reference key="1">
    <citation type="journal article" date="2007" name="J. Bacteriol.">
        <title>Genome of the opportunistic pathogen Streptococcus sanguinis.</title>
        <authorList>
            <person name="Xu P."/>
            <person name="Alves J.M."/>
            <person name="Kitten T."/>
            <person name="Brown A."/>
            <person name="Chen Z."/>
            <person name="Ozaki L.S."/>
            <person name="Manque P."/>
            <person name="Ge X."/>
            <person name="Serrano M.G."/>
            <person name="Puiu D."/>
            <person name="Hendricks S."/>
            <person name="Wang Y."/>
            <person name="Chaplin M.D."/>
            <person name="Akan D."/>
            <person name="Paik S."/>
            <person name="Peterson D.L."/>
            <person name="Macrina F.L."/>
            <person name="Buck G.A."/>
        </authorList>
    </citation>
    <scope>NUCLEOTIDE SEQUENCE [LARGE SCALE GENOMIC DNA]</scope>
    <source>
        <strain>SK36</strain>
    </source>
</reference>